<organism>
    <name type="scientific">Streptococcus pneumoniae (strain Taiwan19F-14)</name>
    <dbReference type="NCBI Taxonomy" id="487213"/>
    <lineage>
        <taxon>Bacteria</taxon>
        <taxon>Bacillati</taxon>
        <taxon>Bacillota</taxon>
        <taxon>Bacilli</taxon>
        <taxon>Lactobacillales</taxon>
        <taxon>Streptococcaceae</taxon>
        <taxon>Streptococcus</taxon>
    </lineage>
</organism>
<feature type="chain" id="PRO_1000192463" description="Transcription antitermination protein NusB">
    <location>
        <begin position="1"/>
        <end position="140"/>
    </location>
</feature>
<gene>
    <name evidence="1" type="primary">nusB</name>
    <name type="ordered locus">SPT_0468</name>
</gene>
<sequence>MTSPLLESRRQLRKCAFQALMSLEFGTDVETACRFAYTHDREDTDVQLPAFLIDLVSGVQAKKEELDKQITQHLKAGWTIERLTLVERNLLRLGVFEITSFDTPQLVAVNEAIELAKDFSDQKSARFINGLLSQFVTEEQ</sequence>
<accession>C1CPU1</accession>
<reference key="1">
    <citation type="journal article" date="2010" name="Genome Biol.">
        <title>Structure and dynamics of the pan-genome of Streptococcus pneumoniae and closely related species.</title>
        <authorList>
            <person name="Donati C."/>
            <person name="Hiller N.L."/>
            <person name="Tettelin H."/>
            <person name="Muzzi A."/>
            <person name="Croucher N.J."/>
            <person name="Angiuoli S.V."/>
            <person name="Oggioni M."/>
            <person name="Dunning Hotopp J.C."/>
            <person name="Hu F.Z."/>
            <person name="Riley D.R."/>
            <person name="Covacci A."/>
            <person name="Mitchell T.J."/>
            <person name="Bentley S.D."/>
            <person name="Kilian M."/>
            <person name="Ehrlich G.D."/>
            <person name="Rappuoli R."/>
            <person name="Moxon E.R."/>
            <person name="Masignani V."/>
        </authorList>
    </citation>
    <scope>NUCLEOTIDE SEQUENCE [LARGE SCALE GENOMIC DNA]</scope>
    <source>
        <strain>Taiwan19F-14</strain>
    </source>
</reference>
<proteinExistence type="inferred from homology"/>
<dbReference type="EMBL" id="CP000921">
    <property type="protein sequence ID" value="ACO22327.1"/>
    <property type="molecule type" value="Genomic_DNA"/>
</dbReference>
<dbReference type="RefSeq" id="WP_000203654.1">
    <property type="nucleotide sequence ID" value="NC_012469.1"/>
</dbReference>
<dbReference type="SMR" id="C1CPU1"/>
<dbReference type="GeneID" id="45652116"/>
<dbReference type="KEGG" id="snt:SPT_0468"/>
<dbReference type="HOGENOM" id="CLU_087843_3_2_9"/>
<dbReference type="GO" id="GO:0005829">
    <property type="term" value="C:cytosol"/>
    <property type="evidence" value="ECO:0007669"/>
    <property type="project" value="TreeGrafter"/>
</dbReference>
<dbReference type="GO" id="GO:0003723">
    <property type="term" value="F:RNA binding"/>
    <property type="evidence" value="ECO:0007669"/>
    <property type="project" value="UniProtKB-UniRule"/>
</dbReference>
<dbReference type="GO" id="GO:0006353">
    <property type="term" value="P:DNA-templated transcription termination"/>
    <property type="evidence" value="ECO:0007669"/>
    <property type="project" value="UniProtKB-UniRule"/>
</dbReference>
<dbReference type="GO" id="GO:0031564">
    <property type="term" value="P:transcription antitermination"/>
    <property type="evidence" value="ECO:0007669"/>
    <property type="project" value="UniProtKB-KW"/>
</dbReference>
<dbReference type="FunFam" id="1.10.940.10:FF:000008">
    <property type="entry name" value="Transcription antitermination protein NusB"/>
    <property type="match status" value="1"/>
</dbReference>
<dbReference type="Gene3D" id="1.10.940.10">
    <property type="entry name" value="NusB-like"/>
    <property type="match status" value="1"/>
</dbReference>
<dbReference type="HAMAP" id="MF_00073">
    <property type="entry name" value="NusB"/>
    <property type="match status" value="1"/>
</dbReference>
<dbReference type="InterPro" id="IPR035926">
    <property type="entry name" value="NusB-like_sf"/>
</dbReference>
<dbReference type="InterPro" id="IPR011605">
    <property type="entry name" value="NusB_fam"/>
</dbReference>
<dbReference type="InterPro" id="IPR006027">
    <property type="entry name" value="NusB_RsmB_TIM44"/>
</dbReference>
<dbReference type="NCBIfam" id="TIGR01951">
    <property type="entry name" value="nusB"/>
    <property type="match status" value="1"/>
</dbReference>
<dbReference type="NCBIfam" id="NF001223">
    <property type="entry name" value="PRK00202.1-1"/>
    <property type="match status" value="1"/>
</dbReference>
<dbReference type="PANTHER" id="PTHR11078:SF3">
    <property type="entry name" value="ANTITERMINATION NUSB DOMAIN-CONTAINING PROTEIN"/>
    <property type="match status" value="1"/>
</dbReference>
<dbReference type="PANTHER" id="PTHR11078">
    <property type="entry name" value="N UTILIZATION SUBSTANCE PROTEIN B-RELATED"/>
    <property type="match status" value="1"/>
</dbReference>
<dbReference type="Pfam" id="PF01029">
    <property type="entry name" value="NusB"/>
    <property type="match status" value="1"/>
</dbReference>
<dbReference type="SUPFAM" id="SSF48013">
    <property type="entry name" value="NusB-like"/>
    <property type="match status" value="1"/>
</dbReference>
<name>NUSB_STRZT</name>
<evidence type="ECO:0000255" key="1">
    <source>
        <dbReference type="HAMAP-Rule" id="MF_00073"/>
    </source>
</evidence>
<comment type="function">
    <text evidence="1">Involved in transcription antitermination. Required for transcription of ribosomal RNA (rRNA) genes. Binds specifically to the boxA antiterminator sequence of the ribosomal RNA (rrn) operons.</text>
</comment>
<comment type="similarity">
    <text evidence="1">Belongs to the NusB family.</text>
</comment>
<protein>
    <recommendedName>
        <fullName evidence="1">Transcription antitermination protein NusB</fullName>
    </recommendedName>
    <alternativeName>
        <fullName evidence="1">Antitermination factor NusB</fullName>
    </alternativeName>
</protein>
<keyword id="KW-0694">RNA-binding</keyword>
<keyword id="KW-0804">Transcription</keyword>
<keyword id="KW-0889">Transcription antitermination</keyword>
<keyword id="KW-0805">Transcription regulation</keyword>